<comment type="function">
    <text evidence="1">Necessary for efficient RNA polymerase transcription elongation past template-encoded arresting sites. The arresting sites in DNA have the property of trapping a certain fraction of elongating RNA polymerases that pass through, resulting in locked ternary complexes. Cleavage of the nascent transcript by cleavage factors such as GreA or GreB allows the resumption of elongation from the new 3'terminus. GreA releases sequences of 2 to 3 nucleotides.</text>
</comment>
<comment type="similarity">
    <text evidence="1">Belongs to the GreA/GreB family.</text>
</comment>
<keyword id="KW-0175">Coiled coil</keyword>
<keyword id="KW-0238">DNA-binding</keyword>
<keyword id="KW-1185">Reference proteome</keyword>
<keyword id="KW-0804">Transcription</keyword>
<keyword id="KW-0805">Transcription regulation</keyword>
<feature type="chain" id="PRO_1000034321" description="Transcription elongation factor GreA">
    <location>
        <begin position="1"/>
        <end position="159"/>
    </location>
</feature>
<feature type="coiled-coil region" evidence="1">
    <location>
        <begin position="46"/>
        <end position="73"/>
    </location>
</feature>
<organism>
    <name type="scientific">Vesicomyosocius okutanii subsp. Calyptogena okutanii (strain HA)</name>
    <dbReference type="NCBI Taxonomy" id="412965"/>
    <lineage>
        <taxon>Bacteria</taxon>
        <taxon>Pseudomonadati</taxon>
        <taxon>Pseudomonadota</taxon>
        <taxon>Gammaproteobacteria</taxon>
        <taxon>Candidatus Pseudothioglobaceae</taxon>
        <taxon>Candidatus Vesicomyosocius</taxon>
    </lineage>
</organism>
<protein>
    <recommendedName>
        <fullName evidence="1">Transcription elongation factor GreA</fullName>
    </recommendedName>
    <alternativeName>
        <fullName evidence="1">Transcript cleavage factor GreA</fullName>
    </alternativeName>
</protein>
<dbReference type="EMBL" id="AP009247">
    <property type="protein sequence ID" value="BAF61904.1"/>
    <property type="molecule type" value="Genomic_DNA"/>
</dbReference>
<dbReference type="RefSeq" id="WP_011930173.1">
    <property type="nucleotide sequence ID" value="NC_009465.1"/>
</dbReference>
<dbReference type="SMR" id="A5CVW9"/>
<dbReference type="STRING" id="412965.COSY_0798"/>
<dbReference type="KEGG" id="vok:COSY_0798"/>
<dbReference type="eggNOG" id="COG0782">
    <property type="taxonomic scope" value="Bacteria"/>
</dbReference>
<dbReference type="HOGENOM" id="CLU_101379_2_0_6"/>
<dbReference type="OrthoDB" id="9808774at2"/>
<dbReference type="Proteomes" id="UP000000247">
    <property type="component" value="Chromosome"/>
</dbReference>
<dbReference type="GO" id="GO:0003677">
    <property type="term" value="F:DNA binding"/>
    <property type="evidence" value="ECO:0007669"/>
    <property type="project" value="UniProtKB-UniRule"/>
</dbReference>
<dbReference type="GO" id="GO:0070063">
    <property type="term" value="F:RNA polymerase binding"/>
    <property type="evidence" value="ECO:0007669"/>
    <property type="project" value="InterPro"/>
</dbReference>
<dbReference type="GO" id="GO:0006354">
    <property type="term" value="P:DNA-templated transcription elongation"/>
    <property type="evidence" value="ECO:0007669"/>
    <property type="project" value="TreeGrafter"/>
</dbReference>
<dbReference type="GO" id="GO:0032784">
    <property type="term" value="P:regulation of DNA-templated transcription elongation"/>
    <property type="evidence" value="ECO:0007669"/>
    <property type="project" value="UniProtKB-UniRule"/>
</dbReference>
<dbReference type="FunFam" id="1.10.287.180:FF:000001">
    <property type="entry name" value="Transcription elongation factor GreA"/>
    <property type="match status" value="1"/>
</dbReference>
<dbReference type="FunFam" id="3.10.50.30:FF:000001">
    <property type="entry name" value="Transcription elongation factor GreA"/>
    <property type="match status" value="1"/>
</dbReference>
<dbReference type="Gene3D" id="3.10.50.30">
    <property type="entry name" value="Transcription elongation factor, GreA/GreB, C-terminal domain"/>
    <property type="match status" value="1"/>
</dbReference>
<dbReference type="Gene3D" id="1.10.287.180">
    <property type="entry name" value="Transcription elongation factor, GreA/GreB, N-terminal domain"/>
    <property type="match status" value="1"/>
</dbReference>
<dbReference type="HAMAP" id="MF_00105">
    <property type="entry name" value="GreA_GreB"/>
    <property type="match status" value="1"/>
</dbReference>
<dbReference type="InterPro" id="IPR036953">
    <property type="entry name" value="GreA/GreB_C_sf"/>
</dbReference>
<dbReference type="InterPro" id="IPR006359">
    <property type="entry name" value="Tscrpt_elong_fac_GreA"/>
</dbReference>
<dbReference type="InterPro" id="IPR028624">
    <property type="entry name" value="Tscrpt_elong_fac_GreA/B"/>
</dbReference>
<dbReference type="InterPro" id="IPR001437">
    <property type="entry name" value="Tscrpt_elong_fac_GreA/B_C"/>
</dbReference>
<dbReference type="InterPro" id="IPR023459">
    <property type="entry name" value="Tscrpt_elong_fac_GreA/B_fam"/>
</dbReference>
<dbReference type="InterPro" id="IPR022691">
    <property type="entry name" value="Tscrpt_elong_fac_GreA/B_N"/>
</dbReference>
<dbReference type="InterPro" id="IPR036805">
    <property type="entry name" value="Tscrpt_elong_fac_GreA/B_N_sf"/>
</dbReference>
<dbReference type="NCBIfam" id="TIGR01462">
    <property type="entry name" value="greA"/>
    <property type="match status" value="1"/>
</dbReference>
<dbReference type="NCBIfam" id="NF001261">
    <property type="entry name" value="PRK00226.1-2"/>
    <property type="match status" value="1"/>
</dbReference>
<dbReference type="NCBIfam" id="NF001263">
    <property type="entry name" value="PRK00226.1-4"/>
    <property type="match status" value="1"/>
</dbReference>
<dbReference type="NCBIfam" id="NF001264">
    <property type="entry name" value="PRK00226.1-5"/>
    <property type="match status" value="1"/>
</dbReference>
<dbReference type="PANTHER" id="PTHR30437">
    <property type="entry name" value="TRANSCRIPTION ELONGATION FACTOR GREA"/>
    <property type="match status" value="1"/>
</dbReference>
<dbReference type="PANTHER" id="PTHR30437:SF4">
    <property type="entry name" value="TRANSCRIPTION ELONGATION FACTOR GREA"/>
    <property type="match status" value="1"/>
</dbReference>
<dbReference type="Pfam" id="PF01272">
    <property type="entry name" value="GreA_GreB"/>
    <property type="match status" value="1"/>
</dbReference>
<dbReference type="Pfam" id="PF03449">
    <property type="entry name" value="GreA_GreB_N"/>
    <property type="match status" value="1"/>
</dbReference>
<dbReference type="PIRSF" id="PIRSF006092">
    <property type="entry name" value="GreA_GreB"/>
    <property type="match status" value="1"/>
</dbReference>
<dbReference type="SUPFAM" id="SSF54534">
    <property type="entry name" value="FKBP-like"/>
    <property type="match status" value="1"/>
</dbReference>
<dbReference type="SUPFAM" id="SSF46557">
    <property type="entry name" value="GreA transcript cleavage protein, N-terminal domain"/>
    <property type="match status" value="1"/>
</dbReference>
<evidence type="ECO:0000255" key="1">
    <source>
        <dbReference type="HAMAP-Rule" id="MF_00105"/>
    </source>
</evidence>
<proteinExistence type="inferred from homology"/>
<accession>A5CVW9</accession>
<name>GREA_VESOH</name>
<sequence length="159" mass="17637">MNNIPVTAFGAKALEAALLKLKDVSRPRIIEDIRIARAHGDLKENAEYHAAKEEQSFVEGRIKEIELKLSRMQIIDVTKLSQDGRCVFGTTITLMNSVDNSEITYQIVGEDEADISLDKISCHSPIASALMGNEEGDKVIVKAPKGDIVYKILSVEYYI</sequence>
<reference key="1">
    <citation type="journal article" date="2007" name="Curr. Biol.">
        <title>Reduced genome of the thioautotrophic intracellular symbiont in a deep-sea clam, Calyptogena okutanii.</title>
        <authorList>
            <person name="Kuwahara H."/>
            <person name="Yoshida T."/>
            <person name="Takaki Y."/>
            <person name="Shimamura S."/>
            <person name="Nishi S."/>
            <person name="Harada M."/>
            <person name="Matsuyama K."/>
            <person name="Takishita K."/>
            <person name="Kawato M."/>
            <person name="Uematsu K."/>
            <person name="Fujiwara Y."/>
            <person name="Sato T."/>
            <person name="Kato C."/>
            <person name="Kitagawa M."/>
            <person name="Kato I."/>
            <person name="Maruyama T."/>
        </authorList>
    </citation>
    <scope>NUCLEOTIDE SEQUENCE [LARGE SCALE GENOMIC DNA]</scope>
    <source>
        <strain>HA</strain>
    </source>
</reference>
<gene>
    <name evidence="1" type="primary">greA</name>
    <name type="ordered locus">COSY_0798</name>
</gene>